<dbReference type="EC" id="3.1.1.4"/>
<dbReference type="GO" id="GO:0005576">
    <property type="term" value="C:extracellular region"/>
    <property type="evidence" value="ECO:0007669"/>
    <property type="project" value="UniProtKB-SubCell"/>
</dbReference>
<dbReference type="GO" id="GO:0046872">
    <property type="term" value="F:metal ion binding"/>
    <property type="evidence" value="ECO:0007669"/>
    <property type="project" value="UniProtKB-KW"/>
</dbReference>
<dbReference type="GO" id="GO:0004623">
    <property type="term" value="F:phospholipase A2 activity"/>
    <property type="evidence" value="ECO:0007669"/>
    <property type="project" value="UniProtKB-EC"/>
</dbReference>
<dbReference type="GO" id="GO:0090729">
    <property type="term" value="F:toxin activity"/>
    <property type="evidence" value="ECO:0007669"/>
    <property type="project" value="UniProtKB-KW"/>
</dbReference>
<dbReference type="GO" id="GO:0016042">
    <property type="term" value="P:lipid catabolic process"/>
    <property type="evidence" value="ECO:0007669"/>
    <property type="project" value="UniProtKB-KW"/>
</dbReference>
<feature type="chain" id="PRO_0000419066" description="Acidic phospholipase A2 Ts-A2">
    <location>
        <begin position="1"/>
        <end position="23" status="greater than"/>
    </location>
</feature>
<feature type="non-terminal residue">
    <location>
        <position position="23"/>
    </location>
</feature>
<organism>
    <name type="scientific">Trimeresurus stejnegeri</name>
    <name type="common">Chinese green tree viper</name>
    <name type="synonym">Viridovipera stejnegeri</name>
    <dbReference type="NCBI Taxonomy" id="39682"/>
    <lineage>
        <taxon>Eukaryota</taxon>
        <taxon>Metazoa</taxon>
        <taxon>Chordata</taxon>
        <taxon>Craniata</taxon>
        <taxon>Vertebrata</taxon>
        <taxon>Euteleostomi</taxon>
        <taxon>Lepidosauria</taxon>
        <taxon>Squamata</taxon>
        <taxon>Bifurcata</taxon>
        <taxon>Unidentata</taxon>
        <taxon>Episquamata</taxon>
        <taxon>Toxicofera</taxon>
        <taxon>Serpentes</taxon>
        <taxon>Colubroidea</taxon>
        <taxon>Viperidae</taxon>
        <taxon>Crotalinae</taxon>
        <taxon>Trimeresurus</taxon>
    </lineage>
</organism>
<accession>P0DJP6</accession>
<keyword id="KW-0106">Calcium</keyword>
<keyword id="KW-0903">Direct protein sequencing</keyword>
<keyword id="KW-1015">Disulfide bond</keyword>
<keyword id="KW-0378">Hydrolase</keyword>
<keyword id="KW-0442">Lipid degradation</keyword>
<keyword id="KW-0443">Lipid metabolism</keyword>
<keyword id="KW-0479">Metal-binding</keyword>
<keyword id="KW-0964">Secreted</keyword>
<keyword id="KW-0800">Toxin</keyword>
<sequence length="23" mass="2770">NLLQFENMIRNVAGRSGIWWYSD</sequence>
<evidence type="ECO:0000250" key="1"/>
<evidence type="ECO:0000255" key="2">
    <source>
        <dbReference type="PROSITE-ProRule" id="PRU10035"/>
    </source>
</evidence>
<evidence type="ECO:0000255" key="3">
    <source>
        <dbReference type="PROSITE-ProRule" id="PRU10036"/>
    </source>
</evidence>
<evidence type="ECO:0000269" key="4">
    <source>
    </source>
</evidence>
<evidence type="ECO:0000305" key="5"/>
<proteinExistence type="evidence at protein level"/>
<reference key="1">
    <citation type="journal article" date="2004" name="Biochem. J.">
        <title>Venom phospholipases A2 of bamboo viper (Trimeresurus stejnegeri): molecular characterization, geographic variations and evidence of multiple ancestries.</title>
        <authorList>
            <person name="Tsai I.-H."/>
            <person name="Wang Y.-M."/>
            <person name="Chen Y.-H."/>
            <person name="Tsai T.-S."/>
            <person name="Tu M.-C."/>
        </authorList>
    </citation>
    <scope>PROTEIN SEQUENCE</scope>
    <scope>FUNCTION</scope>
    <scope>MASS SPECTROMETRY</scope>
    <source>
        <strain>Taiwan</strain>
        <tissue>Venom</tissue>
    </source>
</reference>
<name>PA2AB_TRIST</name>
<comment type="function">
    <text evidence="4">Exhibits moderate hydrolytic activities and prefers the anionic micelles (dPPC with deoxycholate) to the zwitterionic micelles (dPPC with Triton X-100). PLA2 catalyzes the calcium-dependent hydrolysis of the 2-acyl groups in 3-sn-phosphoglycerides.</text>
</comment>
<comment type="catalytic activity">
    <reaction evidence="2 3">
        <text>a 1,2-diacyl-sn-glycero-3-phosphocholine + H2O = a 1-acyl-sn-glycero-3-phosphocholine + a fatty acid + H(+)</text>
        <dbReference type="Rhea" id="RHEA:15801"/>
        <dbReference type="ChEBI" id="CHEBI:15377"/>
        <dbReference type="ChEBI" id="CHEBI:15378"/>
        <dbReference type="ChEBI" id="CHEBI:28868"/>
        <dbReference type="ChEBI" id="CHEBI:57643"/>
        <dbReference type="ChEBI" id="CHEBI:58168"/>
        <dbReference type="EC" id="3.1.1.4"/>
    </reaction>
</comment>
<comment type="cofactor">
    <cofactor evidence="1">
        <name>Ca(2+)</name>
        <dbReference type="ChEBI" id="CHEBI:29108"/>
    </cofactor>
    <text evidence="1">Binds 1 Ca(2+) ion.</text>
</comment>
<comment type="subcellular location">
    <subcellularLocation>
        <location>Secreted</location>
    </subcellularLocation>
</comment>
<comment type="tissue specificity">
    <text>Expressed by the venom gland.</text>
</comment>
<comment type="PTM">
    <text evidence="1">Contains 7 disulfide bonds.</text>
</comment>
<comment type="mass spectrometry" mass="13779.0" method="Electrospray" evidence="4"/>
<comment type="similarity">
    <text evidence="5">Belongs to the phospholipase A2 family. Group II subfamily.</text>
</comment>
<comment type="caution">
    <text evidence="5">According to PubMed:12959640, T.stejnegeri was formerly named T.gramineus, implying that this protein is the same as PLA-II from T.gramineus. They have been kept separated, because T.gramineus and T.stejnegeri are considered to be two different species (see http://reptile-database.org).</text>
</comment>
<protein>
    <recommendedName>
        <fullName>Acidic phospholipase A2 Ts-A2</fullName>
        <shortName>svPLA2</shortName>
        <ecNumber>3.1.1.4</ecNumber>
    </recommendedName>
    <alternativeName>
        <fullName>Phosphatidylcholine 2-acylhydrolase</fullName>
    </alternativeName>
</protein>